<name>PNP_PECCP</name>
<protein>
    <recommendedName>
        <fullName evidence="1">Polyribonucleotide nucleotidyltransferase</fullName>
        <ecNumber evidence="1">2.7.7.8</ecNumber>
    </recommendedName>
    <alternativeName>
        <fullName evidence="1">Polynucleotide phosphorylase</fullName>
        <shortName evidence="1">PNPase</shortName>
    </alternativeName>
</protein>
<evidence type="ECO:0000255" key="1">
    <source>
        <dbReference type="HAMAP-Rule" id="MF_01595"/>
    </source>
</evidence>
<sequence length="706" mass="76331">MLNPIVRKFQYGQHTVTLETGMMARQATAAVMVSMDDTAVFVTVVGAKNAKPGQSFFPLTVNYQERTYAAGRFPGGFFRREGRPSEGETLISRLIDRPIRPLFPEGFLNEVQVIATVVSVNPQVNPDIVAMIGASAALSLSGIPFSGPIGAARVGYLNDQYVLNPTTDELKESRLDLVVAGTEGAVLMVESEADLLSEDQMLGAVVFGHDQQQVVIENINALVAEAGKPKWDWHAPEVNVSLEQRVQALSEARLGDAYRITEKQERYAQVDVIKADVEAALLAEDETLNAGEIQEILGNVEKNVVRSRVLAGEPRIDGREKDMIRGLDVRTGVLPRTHGSALFTRGETQALVTATLGTERDAQTIDELTGERTDRFLLHYNFPPYSVGETGMVGSPKRREIGHGRLAKRGVLAVMPKASEFPYTVRVVSEITESNGSSSMASVCGASLALMDAGVPIKSAVAGIAMGLVKEGDNFVVLSDILGDEDHLGDMDFKVAGSREGITALQMDIKIEGITREIMQVALNQAKGARLHILGVMEQAISTPRGDISEFAPRIHTIKISTDKIKDVIGKGGSVIRALTEETGTTIEIEDDGTVKIASTDGEKAKHAIRRIEEITAEIEVGRVYQGKVTRIVDFGAFVAIGGGKEGLVHISQIADKRVEKVTDYLQMGQEVPVKVLEVDRQGRVRLSIKEATAPTQEAAAPSSEE</sequence>
<keyword id="KW-0963">Cytoplasm</keyword>
<keyword id="KW-0460">Magnesium</keyword>
<keyword id="KW-0479">Metal-binding</keyword>
<keyword id="KW-0548">Nucleotidyltransferase</keyword>
<keyword id="KW-0694">RNA-binding</keyword>
<keyword id="KW-0808">Transferase</keyword>
<dbReference type="EC" id="2.7.7.8" evidence="1"/>
<dbReference type="EMBL" id="CP001657">
    <property type="protein sequence ID" value="ACT11644.1"/>
    <property type="molecule type" value="Genomic_DNA"/>
</dbReference>
<dbReference type="RefSeq" id="WP_012773291.1">
    <property type="nucleotide sequence ID" value="NC_012917.1"/>
</dbReference>
<dbReference type="SMR" id="C6DKK7"/>
<dbReference type="STRING" id="561230.PC1_0589"/>
<dbReference type="KEGG" id="pct:PC1_0589"/>
<dbReference type="eggNOG" id="COG1185">
    <property type="taxonomic scope" value="Bacteria"/>
</dbReference>
<dbReference type="HOGENOM" id="CLU_004217_2_2_6"/>
<dbReference type="OrthoDB" id="9804305at2"/>
<dbReference type="Proteomes" id="UP000002736">
    <property type="component" value="Chromosome"/>
</dbReference>
<dbReference type="GO" id="GO:0005829">
    <property type="term" value="C:cytosol"/>
    <property type="evidence" value="ECO:0007669"/>
    <property type="project" value="TreeGrafter"/>
</dbReference>
<dbReference type="GO" id="GO:0000175">
    <property type="term" value="F:3'-5'-RNA exonuclease activity"/>
    <property type="evidence" value="ECO:0007669"/>
    <property type="project" value="TreeGrafter"/>
</dbReference>
<dbReference type="GO" id="GO:0000287">
    <property type="term" value="F:magnesium ion binding"/>
    <property type="evidence" value="ECO:0007669"/>
    <property type="project" value="UniProtKB-UniRule"/>
</dbReference>
<dbReference type="GO" id="GO:0004654">
    <property type="term" value="F:polyribonucleotide nucleotidyltransferase activity"/>
    <property type="evidence" value="ECO:0007669"/>
    <property type="project" value="UniProtKB-UniRule"/>
</dbReference>
<dbReference type="GO" id="GO:0003723">
    <property type="term" value="F:RNA binding"/>
    <property type="evidence" value="ECO:0007669"/>
    <property type="project" value="UniProtKB-UniRule"/>
</dbReference>
<dbReference type="GO" id="GO:0006402">
    <property type="term" value="P:mRNA catabolic process"/>
    <property type="evidence" value="ECO:0007669"/>
    <property type="project" value="UniProtKB-UniRule"/>
</dbReference>
<dbReference type="GO" id="GO:0006396">
    <property type="term" value="P:RNA processing"/>
    <property type="evidence" value="ECO:0007669"/>
    <property type="project" value="InterPro"/>
</dbReference>
<dbReference type="CDD" id="cd02393">
    <property type="entry name" value="KH-I_PNPase"/>
    <property type="match status" value="1"/>
</dbReference>
<dbReference type="CDD" id="cd11363">
    <property type="entry name" value="RNase_PH_PNPase_1"/>
    <property type="match status" value="1"/>
</dbReference>
<dbReference type="CDD" id="cd11364">
    <property type="entry name" value="RNase_PH_PNPase_2"/>
    <property type="match status" value="1"/>
</dbReference>
<dbReference type="CDD" id="cd04472">
    <property type="entry name" value="S1_PNPase"/>
    <property type="match status" value="1"/>
</dbReference>
<dbReference type="FunFam" id="2.40.50.140:FF:000023">
    <property type="entry name" value="Polyribonucleotide nucleotidyltransferase"/>
    <property type="match status" value="1"/>
</dbReference>
<dbReference type="FunFam" id="3.30.1370.10:FF:000001">
    <property type="entry name" value="Polyribonucleotide nucleotidyltransferase"/>
    <property type="match status" value="1"/>
</dbReference>
<dbReference type="FunFam" id="3.30.230.70:FF:000001">
    <property type="entry name" value="Polyribonucleotide nucleotidyltransferase"/>
    <property type="match status" value="1"/>
</dbReference>
<dbReference type="FunFam" id="3.30.230.70:FF:000002">
    <property type="entry name" value="Polyribonucleotide nucleotidyltransferase"/>
    <property type="match status" value="1"/>
</dbReference>
<dbReference type="Gene3D" id="3.30.230.70">
    <property type="entry name" value="GHMP Kinase, N-terminal domain"/>
    <property type="match status" value="2"/>
</dbReference>
<dbReference type="Gene3D" id="3.30.1370.10">
    <property type="entry name" value="K Homology domain, type 1"/>
    <property type="match status" value="1"/>
</dbReference>
<dbReference type="Gene3D" id="2.40.50.140">
    <property type="entry name" value="Nucleic acid-binding proteins"/>
    <property type="match status" value="1"/>
</dbReference>
<dbReference type="HAMAP" id="MF_01595">
    <property type="entry name" value="PNPase"/>
    <property type="match status" value="1"/>
</dbReference>
<dbReference type="InterPro" id="IPR001247">
    <property type="entry name" value="ExoRNase_PH_dom1"/>
</dbReference>
<dbReference type="InterPro" id="IPR015847">
    <property type="entry name" value="ExoRNase_PH_dom2"/>
</dbReference>
<dbReference type="InterPro" id="IPR036345">
    <property type="entry name" value="ExoRNase_PH_dom2_sf"/>
</dbReference>
<dbReference type="InterPro" id="IPR004087">
    <property type="entry name" value="KH_dom"/>
</dbReference>
<dbReference type="InterPro" id="IPR004088">
    <property type="entry name" value="KH_dom_type_1"/>
</dbReference>
<dbReference type="InterPro" id="IPR036612">
    <property type="entry name" value="KH_dom_type_1_sf"/>
</dbReference>
<dbReference type="InterPro" id="IPR012340">
    <property type="entry name" value="NA-bd_OB-fold"/>
</dbReference>
<dbReference type="InterPro" id="IPR012162">
    <property type="entry name" value="PNPase"/>
</dbReference>
<dbReference type="InterPro" id="IPR027408">
    <property type="entry name" value="PNPase/RNase_PH_dom_sf"/>
</dbReference>
<dbReference type="InterPro" id="IPR015848">
    <property type="entry name" value="PNPase_PH_RNA-bd_bac/org-type"/>
</dbReference>
<dbReference type="InterPro" id="IPR036456">
    <property type="entry name" value="PNPase_PH_RNA-bd_sf"/>
</dbReference>
<dbReference type="InterPro" id="IPR020568">
    <property type="entry name" value="Ribosomal_Su5_D2-typ_SF"/>
</dbReference>
<dbReference type="InterPro" id="IPR003029">
    <property type="entry name" value="S1_domain"/>
</dbReference>
<dbReference type="NCBIfam" id="TIGR03591">
    <property type="entry name" value="polynuc_phos"/>
    <property type="match status" value="1"/>
</dbReference>
<dbReference type="NCBIfam" id="NF008805">
    <property type="entry name" value="PRK11824.1"/>
    <property type="match status" value="1"/>
</dbReference>
<dbReference type="PANTHER" id="PTHR11252">
    <property type="entry name" value="POLYRIBONUCLEOTIDE NUCLEOTIDYLTRANSFERASE"/>
    <property type="match status" value="1"/>
</dbReference>
<dbReference type="PANTHER" id="PTHR11252:SF0">
    <property type="entry name" value="POLYRIBONUCLEOTIDE NUCLEOTIDYLTRANSFERASE 1, MITOCHONDRIAL"/>
    <property type="match status" value="1"/>
</dbReference>
<dbReference type="Pfam" id="PF00013">
    <property type="entry name" value="KH_1"/>
    <property type="match status" value="1"/>
</dbReference>
<dbReference type="Pfam" id="PF03726">
    <property type="entry name" value="PNPase"/>
    <property type="match status" value="1"/>
</dbReference>
<dbReference type="Pfam" id="PF01138">
    <property type="entry name" value="RNase_PH"/>
    <property type="match status" value="2"/>
</dbReference>
<dbReference type="Pfam" id="PF03725">
    <property type="entry name" value="RNase_PH_C"/>
    <property type="match status" value="2"/>
</dbReference>
<dbReference type="Pfam" id="PF00575">
    <property type="entry name" value="S1"/>
    <property type="match status" value="1"/>
</dbReference>
<dbReference type="PIRSF" id="PIRSF005499">
    <property type="entry name" value="PNPase"/>
    <property type="match status" value="1"/>
</dbReference>
<dbReference type="SMART" id="SM00322">
    <property type="entry name" value="KH"/>
    <property type="match status" value="1"/>
</dbReference>
<dbReference type="SMART" id="SM00316">
    <property type="entry name" value="S1"/>
    <property type="match status" value="1"/>
</dbReference>
<dbReference type="SUPFAM" id="SSF54791">
    <property type="entry name" value="Eukaryotic type KH-domain (KH-domain type I)"/>
    <property type="match status" value="1"/>
</dbReference>
<dbReference type="SUPFAM" id="SSF50249">
    <property type="entry name" value="Nucleic acid-binding proteins"/>
    <property type="match status" value="1"/>
</dbReference>
<dbReference type="SUPFAM" id="SSF46915">
    <property type="entry name" value="Polynucleotide phosphorylase/guanosine pentaphosphate synthase (PNPase/GPSI), domain 3"/>
    <property type="match status" value="1"/>
</dbReference>
<dbReference type="SUPFAM" id="SSF55666">
    <property type="entry name" value="Ribonuclease PH domain 2-like"/>
    <property type="match status" value="2"/>
</dbReference>
<dbReference type="SUPFAM" id="SSF54211">
    <property type="entry name" value="Ribosomal protein S5 domain 2-like"/>
    <property type="match status" value="2"/>
</dbReference>
<dbReference type="PROSITE" id="PS50084">
    <property type="entry name" value="KH_TYPE_1"/>
    <property type="match status" value="1"/>
</dbReference>
<dbReference type="PROSITE" id="PS50126">
    <property type="entry name" value="S1"/>
    <property type="match status" value="1"/>
</dbReference>
<comment type="function">
    <text evidence="1">Involved in mRNA degradation. Catalyzes the phosphorolysis of single-stranded polyribonucleotides processively in the 3'- to 5'-direction.</text>
</comment>
<comment type="catalytic activity">
    <reaction evidence="1">
        <text>RNA(n+1) + phosphate = RNA(n) + a ribonucleoside 5'-diphosphate</text>
        <dbReference type="Rhea" id="RHEA:22096"/>
        <dbReference type="Rhea" id="RHEA-COMP:14527"/>
        <dbReference type="Rhea" id="RHEA-COMP:17342"/>
        <dbReference type="ChEBI" id="CHEBI:43474"/>
        <dbReference type="ChEBI" id="CHEBI:57930"/>
        <dbReference type="ChEBI" id="CHEBI:140395"/>
        <dbReference type="EC" id="2.7.7.8"/>
    </reaction>
</comment>
<comment type="cofactor">
    <cofactor evidence="1">
        <name>Mg(2+)</name>
        <dbReference type="ChEBI" id="CHEBI:18420"/>
    </cofactor>
</comment>
<comment type="subunit">
    <text evidence="1">Component of the RNA degradosome, which is a multiprotein complex involved in RNA processing and mRNA degradation.</text>
</comment>
<comment type="subcellular location">
    <subcellularLocation>
        <location evidence="1">Cytoplasm</location>
    </subcellularLocation>
</comment>
<comment type="similarity">
    <text evidence="1">Belongs to the polyribonucleotide nucleotidyltransferase family.</text>
</comment>
<organism>
    <name type="scientific">Pectobacterium carotovorum subsp. carotovorum (strain PC1)</name>
    <dbReference type="NCBI Taxonomy" id="561230"/>
    <lineage>
        <taxon>Bacteria</taxon>
        <taxon>Pseudomonadati</taxon>
        <taxon>Pseudomonadota</taxon>
        <taxon>Gammaproteobacteria</taxon>
        <taxon>Enterobacterales</taxon>
        <taxon>Pectobacteriaceae</taxon>
        <taxon>Pectobacterium</taxon>
    </lineage>
</organism>
<gene>
    <name evidence="1" type="primary">pnp</name>
    <name type="ordered locus">PC1_0589</name>
</gene>
<feature type="chain" id="PRO_1000215665" description="Polyribonucleotide nucleotidyltransferase">
    <location>
        <begin position="1"/>
        <end position="706"/>
    </location>
</feature>
<feature type="domain" description="KH" evidence="1">
    <location>
        <begin position="553"/>
        <end position="612"/>
    </location>
</feature>
<feature type="domain" description="S1 motif" evidence="1">
    <location>
        <begin position="622"/>
        <end position="690"/>
    </location>
</feature>
<feature type="binding site" evidence="1">
    <location>
        <position position="486"/>
    </location>
    <ligand>
        <name>Mg(2+)</name>
        <dbReference type="ChEBI" id="CHEBI:18420"/>
    </ligand>
</feature>
<feature type="binding site" evidence="1">
    <location>
        <position position="492"/>
    </location>
    <ligand>
        <name>Mg(2+)</name>
        <dbReference type="ChEBI" id="CHEBI:18420"/>
    </ligand>
</feature>
<accession>C6DKK7</accession>
<proteinExistence type="inferred from homology"/>
<reference key="1">
    <citation type="submission" date="2009-07" db="EMBL/GenBank/DDBJ databases">
        <title>Complete sequence of Pectobacterium carotovorum subsp. carotovorum PC1.</title>
        <authorList>
            <consortium name="US DOE Joint Genome Institute"/>
            <person name="Lucas S."/>
            <person name="Copeland A."/>
            <person name="Lapidus A."/>
            <person name="Glavina del Rio T."/>
            <person name="Tice H."/>
            <person name="Bruce D."/>
            <person name="Goodwin L."/>
            <person name="Pitluck S."/>
            <person name="Munk A.C."/>
            <person name="Brettin T."/>
            <person name="Detter J.C."/>
            <person name="Han C."/>
            <person name="Tapia R."/>
            <person name="Larimer F."/>
            <person name="Land M."/>
            <person name="Hauser L."/>
            <person name="Kyrpides N."/>
            <person name="Mikhailova N."/>
            <person name="Balakrishnan V."/>
            <person name="Glasner J."/>
            <person name="Perna N.T."/>
        </authorList>
    </citation>
    <scope>NUCLEOTIDE SEQUENCE [LARGE SCALE GENOMIC DNA]</scope>
    <source>
        <strain>PC1</strain>
    </source>
</reference>